<reference key="1">
    <citation type="submission" date="2007-08" db="EMBL/GenBank/DDBJ databases">
        <authorList>
            <consortium name="The Vibrio harveyi Genome Sequencing Project"/>
            <person name="Bassler B."/>
            <person name="Clifton S.W."/>
            <person name="Fulton L."/>
            <person name="Delehaunty K."/>
            <person name="Fronick C."/>
            <person name="Harrison M."/>
            <person name="Markivic C."/>
            <person name="Fulton R."/>
            <person name="Tin-Wollam A.-M."/>
            <person name="Shah N."/>
            <person name="Pepin K."/>
            <person name="Nash W."/>
            <person name="Thiruvilangam P."/>
            <person name="Bhonagiri V."/>
            <person name="Waters C."/>
            <person name="Tu K.C."/>
            <person name="Irgon J."/>
            <person name="Wilson R.K."/>
        </authorList>
    </citation>
    <scope>NUCLEOTIDE SEQUENCE [LARGE SCALE GENOMIC DNA]</scope>
    <source>
        <strain>ATCC BAA-1116 / BB120</strain>
    </source>
</reference>
<comment type="function">
    <text evidence="1">Binds to the 23S rRNA.</text>
</comment>
<comment type="similarity">
    <text evidence="1">Belongs to the bacterial ribosomal protein bL9 family.</text>
</comment>
<sequence>MQVILLDKIGNLGGLGDTVNVKSGYARNFLIPQGKAVMATKGNVEMFEARRAELEAKVAEQLAAAEARAEKVNALEAVVLASKAGDEGKLFGSIGTRDIAEAITAAGVEVAKSEVRLPEGALRNTGEFEISVQLHSEVFATINLQVVAAE</sequence>
<dbReference type="EMBL" id="CP000789">
    <property type="protein sequence ID" value="ABU69080.1"/>
    <property type="molecule type" value="Genomic_DNA"/>
</dbReference>
<dbReference type="RefSeq" id="WP_005451518.1">
    <property type="nucleotide sequence ID" value="NC_022269.1"/>
</dbReference>
<dbReference type="SMR" id="A7MSX5"/>
<dbReference type="GeneID" id="83583715"/>
<dbReference type="KEGG" id="vha:VIBHAR_00020"/>
<dbReference type="PATRIC" id="fig|338187.25.peg.2502"/>
<dbReference type="Proteomes" id="UP000008152">
    <property type="component" value="Chromosome I"/>
</dbReference>
<dbReference type="GO" id="GO:1990904">
    <property type="term" value="C:ribonucleoprotein complex"/>
    <property type="evidence" value="ECO:0007669"/>
    <property type="project" value="UniProtKB-KW"/>
</dbReference>
<dbReference type="GO" id="GO:0005840">
    <property type="term" value="C:ribosome"/>
    <property type="evidence" value="ECO:0007669"/>
    <property type="project" value="UniProtKB-KW"/>
</dbReference>
<dbReference type="GO" id="GO:0019843">
    <property type="term" value="F:rRNA binding"/>
    <property type="evidence" value="ECO:0007669"/>
    <property type="project" value="UniProtKB-UniRule"/>
</dbReference>
<dbReference type="GO" id="GO:0003735">
    <property type="term" value="F:structural constituent of ribosome"/>
    <property type="evidence" value="ECO:0007669"/>
    <property type="project" value="InterPro"/>
</dbReference>
<dbReference type="GO" id="GO:0006412">
    <property type="term" value="P:translation"/>
    <property type="evidence" value="ECO:0007669"/>
    <property type="project" value="UniProtKB-UniRule"/>
</dbReference>
<dbReference type="FunFam" id="3.10.430.100:FF:000001">
    <property type="entry name" value="50S ribosomal protein L9"/>
    <property type="match status" value="1"/>
</dbReference>
<dbReference type="FunFam" id="3.40.5.10:FF:000001">
    <property type="entry name" value="50S ribosomal protein L9"/>
    <property type="match status" value="1"/>
</dbReference>
<dbReference type="Gene3D" id="3.10.430.100">
    <property type="entry name" value="Ribosomal protein L9, C-terminal domain"/>
    <property type="match status" value="1"/>
</dbReference>
<dbReference type="Gene3D" id="3.40.5.10">
    <property type="entry name" value="Ribosomal protein L9, N-terminal domain"/>
    <property type="match status" value="1"/>
</dbReference>
<dbReference type="HAMAP" id="MF_00503">
    <property type="entry name" value="Ribosomal_bL9"/>
    <property type="match status" value="1"/>
</dbReference>
<dbReference type="InterPro" id="IPR000244">
    <property type="entry name" value="Ribosomal_bL9"/>
</dbReference>
<dbReference type="InterPro" id="IPR009027">
    <property type="entry name" value="Ribosomal_bL9/RNase_H1_N"/>
</dbReference>
<dbReference type="InterPro" id="IPR020594">
    <property type="entry name" value="Ribosomal_bL9_bac/chp"/>
</dbReference>
<dbReference type="InterPro" id="IPR020069">
    <property type="entry name" value="Ribosomal_bL9_C"/>
</dbReference>
<dbReference type="InterPro" id="IPR036791">
    <property type="entry name" value="Ribosomal_bL9_C_sf"/>
</dbReference>
<dbReference type="InterPro" id="IPR020070">
    <property type="entry name" value="Ribosomal_bL9_N"/>
</dbReference>
<dbReference type="InterPro" id="IPR036935">
    <property type="entry name" value="Ribosomal_bL9_N_sf"/>
</dbReference>
<dbReference type="NCBIfam" id="TIGR00158">
    <property type="entry name" value="L9"/>
    <property type="match status" value="1"/>
</dbReference>
<dbReference type="PANTHER" id="PTHR21368">
    <property type="entry name" value="50S RIBOSOMAL PROTEIN L9"/>
    <property type="match status" value="1"/>
</dbReference>
<dbReference type="Pfam" id="PF03948">
    <property type="entry name" value="Ribosomal_L9_C"/>
    <property type="match status" value="1"/>
</dbReference>
<dbReference type="Pfam" id="PF01281">
    <property type="entry name" value="Ribosomal_L9_N"/>
    <property type="match status" value="1"/>
</dbReference>
<dbReference type="SUPFAM" id="SSF55658">
    <property type="entry name" value="L9 N-domain-like"/>
    <property type="match status" value="1"/>
</dbReference>
<dbReference type="SUPFAM" id="SSF55653">
    <property type="entry name" value="Ribosomal protein L9 C-domain"/>
    <property type="match status" value="1"/>
</dbReference>
<dbReference type="PROSITE" id="PS00651">
    <property type="entry name" value="RIBOSOMAL_L9"/>
    <property type="match status" value="1"/>
</dbReference>
<feature type="chain" id="PRO_1000014884" description="Large ribosomal subunit protein bL9">
    <location>
        <begin position="1"/>
        <end position="150"/>
    </location>
</feature>
<organism>
    <name type="scientific">Vibrio campbellii (strain ATCC BAA-1116)</name>
    <dbReference type="NCBI Taxonomy" id="2902295"/>
    <lineage>
        <taxon>Bacteria</taxon>
        <taxon>Pseudomonadati</taxon>
        <taxon>Pseudomonadota</taxon>
        <taxon>Gammaproteobacteria</taxon>
        <taxon>Vibrionales</taxon>
        <taxon>Vibrionaceae</taxon>
        <taxon>Vibrio</taxon>
    </lineage>
</organism>
<evidence type="ECO:0000255" key="1">
    <source>
        <dbReference type="HAMAP-Rule" id="MF_00503"/>
    </source>
</evidence>
<evidence type="ECO:0000305" key="2"/>
<name>RL9_VIBC1</name>
<keyword id="KW-0687">Ribonucleoprotein</keyword>
<keyword id="KW-0689">Ribosomal protein</keyword>
<keyword id="KW-0694">RNA-binding</keyword>
<keyword id="KW-0699">rRNA-binding</keyword>
<proteinExistence type="inferred from homology"/>
<protein>
    <recommendedName>
        <fullName evidence="1">Large ribosomal subunit protein bL9</fullName>
    </recommendedName>
    <alternativeName>
        <fullName evidence="2">50S ribosomal protein L9</fullName>
    </alternativeName>
</protein>
<accession>A7MSX5</accession>
<gene>
    <name evidence="1" type="primary">rplI</name>
    <name type="ordered locus">VIBHAR_00020</name>
</gene>